<reference key="1">
    <citation type="journal article" date="2000" name="Nature">
        <title>Sequence and analysis of chromosome 1 of the plant Arabidopsis thaliana.</title>
        <authorList>
            <person name="Theologis A."/>
            <person name="Ecker J.R."/>
            <person name="Palm C.J."/>
            <person name="Federspiel N.A."/>
            <person name="Kaul S."/>
            <person name="White O."/>
            <person name="Alonso J."/>
            <person name="Altafi H."/>
            <person name="Araujo R."/>
            <person name="Bowman C.L."/>
            <person name="Brooks S.Y."/>
            <person name="Buehler E."/>
            <person name="Chan A."/>
            <person name="Chao Q."/>
            <person name="Chen H."/>
            <person name="Cheuk R.F."/>
            <person name="Chin C.W."/>
            <person name="Chung M.K."/>
            <person name="Conn L."/>
            <person name="Conway A.B."/>
            <person name="Conway A.R."/>
            <person name="Creasy T.H."/>
            <person name="Dewar K."/>
            <person name="Dunn P."/>
            <person name="Etgu P."/>
            <person name="Feldblyum T.V."/>
            <person name="Feng J.-D."/>
            <person name="Fong B."/>
            <person name="Fujii C.Y."/>
            <person name="Gill J.E."/>
            <person name="Goldsmith A.D."/>
            <person name="Haas B."/>
            <person name="Hansen N.F."/>
            <person name="Hughes B."/>
            <person name="Huizar L."/>
            <person name="Hunter J.L."/>
            <person name="Jenkins J."/>
            <person name="Johnson-Hopson C."/>
            <person name="Khan S."/>
            <person name="Khaykin E."/>
            <person name="Kim C.J."/>
            <person name="Koo H.L."/>
            <person name="Kremenetskaia I."/>
            <person name="Kurtz D.B."/>
            <person name="Kwan A."/>
            <person name="Lam B."/>
            <person name="Langin-Hooper S."/>
            <person name="Lee A."/>
            <person name="Lee J.M."/>
            <person name="Lenz C.A."/>
            <person name="Li J.H."/>
            <person name="Li Y.-P."/>
            <person name="Lin X."/>
            <person name="Liu S.X."/>
            <person name="Liu Z.A."/>
            <person name="Luros J.S."/>
            <person name="Maiti R."/>
            <person name="Marziali A."/>
            <person name="Militscher J."/>
            <person name="Miranda M."/>
            <person name="Nguyen M."/>
            <person name="Nierman W.C."/>
            <person name="Osborne B.I."/>
            <person name="Pai G."/>
            <person name="Peterson J."/>
            <person name="Pham P.K."/>
            <person name="Rizzo M."/>
            <person name="Rooney T."/>
            <person name="Rowley D."/>
            <person name="Sakano H."/>
            <person name="Salzberg S.L."/>
            <person name="Schwartz J.R."/>
            <person name="Shinn P."/>
            <person name="Southwick A.M."/>
            <person name="Sun H."/>
            <person name="Tallon L.J."/>
            <person name="Tambunga G."/>
            <person name="Toriumi M.J."/>
            <person name="Town C.D."/>
            <person name="Utterback T."/>
            <person name="Van Aken S."/>
            <person name="Vaysberg M."/>
            <person name="Vysotskaia V.S."/>
            <person name="Walker M."/>
            <person name="Wu D."/>
            <person name="Yu G."/>
            <person name="Fraser C.M."/>
            <person name="Venter J.C."/>
            <person name="Davis R.W."/>
        </authorList>
    </citation>
    <scope>NUCLEOTIDE SEQUENCE [LARGE SCALE GENOMIC DNA]</scope>
    <source>
        <strain>cv. Columbia</strain>
    </source>
</reference>
<reference key="2">
    <citation type="journal article" date="2017" name="Plant J.">
        <title>Araport11: a complete reannotation of the Arabidopsis thaliana reference genome.</title>
        <authorList>
            <person name="Cheng C.Y."/>
            <person name="Krishnakumar V."/>
            <person name="Chan A.P."/>
            <person name="Thibaud-Nissen F."/>
            <person name="Schobel S."/>
            <person name="Town C.D."/>
        </authorList>
    </citation>
    <scope>GENOME REANNOTATION</scope>
    <source>
        <strain>cv. Columbia</strain>
    </source>
</reference>
<reference key="3">
    <citation type="journal article" date="2004" name="Genome Res.">
        <title>Whole genome sequence comparisons and 'full-length' cDNA sequences: a combined approach to evaluate and improve Arabidopsis genome annotation.</title>
        <authorList>
            <person name="Castelli V."/>
            <person name="Aury J.-M."/>
            <person name="Jaillon O."/>
            <person name="Wincker P."/>
            <person name="Clepet C."/>
            <person name="Menard M."/>
            <person name="Cruaud C."/>
            <person name="Quetier F."/>
            <person name="Scarpelli C."/>
            <person name="Schaechter V."/>
            <person name="Temple G."/>
            <person name="Caboche M."/>
            <person name="Weissenbach J."/>
            <person name="Salanoubat M."/>
        </authorList>
    </citation>
    <scope>NUCLEOTIDE SEQUENCE [LARGE SCALE MRNA]</scope>
    <source>
        <strain>cv. Columbia</strain>
    </source>
</reference>
<reference key="4">
    <citation type="journal article" date="2008" name="BMC Genomics">
        <title>Genome-wide and expression analysis of protein phosphatase 2C in rice and Arabidopsis.</title>
        <authorList>
            <person name="Xue T."/>
            <person name="Wang D."/>
            <person name="Zhang S."/>
            <person name="Ehlting J."/>
            <person name="Ni F."/>
            <person name="Jacab S."/>
            <person name="Zheng C."/>
            <person name="Zhong Y."/>
        </authorList>
    </citation>
    <scope>GENE FAMILY</scope>
    <scope>NOMENCLATURE</scope>
</reference>
<evidence type="ECO:0000250" key="1"/>
<evidence type="ECO:0000255" key="2">
    <source>
        <dbReference type="PROSITE-ProRule" id="PRU01082"/>
    </source>
</evidence>
<evidence type="ECO:0000256" key="3">
    <source>
        <dbReference type="SAM" id="MobiDB-lite"/>
    </source>
</evidence>
<evidence type="ECO:0000305" key="4"/>
<name>P2C14_ARATH</name>
<gene>
    <name type="ordered locus">At1g67820</name>
    <name type="ORF">F12A21.5</name>
</gene>
<feature type="chain" id="PRO_0000367945" description="Probable protein phosphatase 2C 14">
    <location>
        <begin position="1"/>
        <end position="445"/>
    </location>
</feature>
<feature type="domain" description="PPM-type phosphatase" evidence="2">
    <location>
        <begin position="120"/>
        <end position="440"/>
    </location>
</feature>
<feature type="region of interest" description="Disordered" evidence="3">
    <location>
        <begin position="384"/>
        <end position="404"/>
    </location>
</feature>
<feature type="compositionally biased region" description="Polar residues" evidence="3">
    <location>
        <begin position="390"/>
        <end position="404"/>
    </location>
</feature>
<feature type="binding site" evidence="1">
    <location>
        <position position="156"/>
    </location>
    <ligand>
        <name>Mn(2+)</name>
        <dbReference type="ChEBI" id="CHEBI:29035"/>
        <label>1</label>
    </ligand>
</feature>
<feature type="binding site" evidence="1">
    <location>
        <position position="156"/>
    </location>
    <ligand>
        <name>Mn(2+)</name>
        <dbReference type="ChEBI" id="CHEBI:29035"/>
        <label>2</label>
    </ligand>
</feature>
<feature type="binding site" evidence="1">
    <location>
        <position position="157"/>
    </location>
    <ligand>
        <name>Mn(2+)</name>
        <dbReference type="ChEBI" id="CHEBI:29035"/>
        <label>1</label>
    </ligand>
</feature>
<feature type="binding site" evidence="1">
    <location>
        <position position="318"/>
    </location>
    <ligand>
        <name>Mn(2+)</name>
        <dbReference type="ChEBI" id="CHEBI:29035"/>
        <label>2</label>
    </ligand>
</feature>
<feature type="binding site" evidence="1">
    <location>
        <position position="431"/>
    </location>
    <ligand>
        <name>Mn(2+)</name>
        <dbReference type="ChEBI" id="CHEBI:29035"/>
        <label>2</label>
    </ligand>
</feature>
<keyword id="KW-0378">Hydrolase</keyword>
<keyword id="KW-0460">Magnesium</keyword>
<keyword id="KW-0464">Manganese</keyword>
<keyword id="KW-0479">Metal-binding</keyword>
<keyword id="KW-0904">Protein phosphatase</keyword>
<keyword id="KW-1185">Reference proteome</keyword>
<sequence>MTNKLRSEETITSLSSFMASTLSIASPSPCSIPLSVTKVSPLKRKRPTHLNIPDLNPQQPISTDYFRFREGDAKVSPLKRKRPAHLNIPDLNPQQPIRTDYFSFTDFAHQNGTVSFGGNGFGVVSRNGKKKFMEDTHRIVPCLVGNSKKSFFGVYDGHGGAKAAEFVAENLHKYVVEMMENCKGKEEKVEAFKAAFLRTDRDFLEKGVVSGACCVTAVIQDQEMIVSNLGDCRAVLCRAGVAEALTDDHKPGRDDEKERIESQGGYVDNHQGAWRVQGILAVSRSIGDAHLKKWVVAEPETRVLELEQDMEFLVLASDGLWDVVSNQEAVYTVLHVLAQRKTPKESEEENLVQGFVNMSPSSKLRRASLVKSPRCAKSQSYYYNSENESPSLNREIGSSPSKSPITPWKSLWAKAACKELANLAAKRGSMDDITVVIIDLNHYKG</sequence>
<organism>
    <name type="scientific">Arabidopsis thaliana</name>
    <name type="common">Mouse-ear cress</name>
    <dbReference type="NCBI Taxonomy" id="3702"/>
    <lineage>
        <taxon>Eukaryota</taxon>
        <taxon>Viridiplantae</taxon>
        <taxon>Streptophyta</taxon>
        <taxon>Embryophyta</taxon>
        <taxon>Tracheophyta</taxon>
        <taxon>Spermatophyta</taxon>
        <taxon>Magnoliopsida</taxon>
        <taxon>eudicotyledons</taxon>
        <taxon>Gunneridae</taxon>
        <taxon>Pentapetalae</taxon>
        <taxon>rosids</taxon>
        <taxon>malvids</taxon>
        <taxon>Brassicales</taxon>
        <taxon>Brassicaceae</taxon>
        <taxon>Camelineae</taxon>
        <taxon>Arabidopsis</taxon>
    </lineage>
</organism>
<dbReference type="EC" id="3.1.3.16"/>
<dbReference type="EMBL" id="AC008113">
    <property type="protein sequence ID" value="AAG28911.1"/>
    <property type="status" value="ALT_SEQ"/>
    <property type="molecule type" value="Genomic_DNA"/>
</dbReference>
<dbReference type="EMBL" id="CP002684">
    <property type="protein sequence ID" value="AEE34702.1"/>
    <property type="molecule type" value="Genomic_DNA"/>
</dbReference>
<dbReference type="EMBL" id="BX813565">
    <property type="status" value="NOT_ANNOTATED_CDS"/>
    <property type="molecule type" value="mRNA"/>
</dbReference>
<dbReference type="PIR" id="H96700">
    <property type="entry name" value="H96700"/>
</dbReference>
<dbReference type="RefSeq" id="NP_176948.2">
    <property type="nucleotide sequence ID" value="NM_105450.4"/>
</dbReference>
<dbReference type="SMR" id="Q9FXE4"/>
<dbReference type="BioGRID" id="28329">
    <property type="interactions" value="2"/>
</dbReference>
<dbReference type="FunCoup" id="Q9FXE4">
    <property type="interactions" value="4"/>
</dbReference>
<dbReference type="STRING" id="3702.Q9FXE4"/>
<dbReference type="GlyGen" id="Q9FXE4">
    <property type="glycosylation" value="1 site"/>
</dbReference>
<dbReference type="iPTMnet" id="Q9FXE4"/>
<dbReference type="PaxDb" id="3702-AT1G67820.1"/>
<dbReference type="ProteomicsDB" id="248793"/>
<dbReference type="EnsemblPlants" id="AT1G67820.1">
    <property type="protein sequence ID" value="AT1G67820.1"/>
    <property type="gene ID" value="AT1G67820"/>
</dbReference>
<dbReference type="GeneID" id="843108"/>
<dbReference type="Gramene" id="AT1G67820.1">
    <property type="protein sequence ID" value="AT1G67820.1"/>
    <property type="gene ID" value="AT1G67820"/>
</dbReference>
<dbReference type="KEGG" id="ath:AT1G67820"/>
<dbReference type="Araport" id="AT1G67820"/>
<dbReference type="TAIR" id="AT1G67820"/>
<dbReference type="eggNOG" id="KOG0698">
    <property type="taxonomic scope" value="Eukaryota"/>
</dbReference>
<dbReference type="HOGENOM" id="CLU_013173_5_1_1"/>
<dbReference type="InParanoid" id="Q9FXE4"/>
<dbReference type="PhylomeDB" id="Q9FXE4"/>
<dbReference type="PRO" id="PR:Q9FXE4"/>
<dbReference type="Proteomes" id="UP000006548">
    <property type="component" value="Chromosome 1"/>
</dbReference>
<dbReference type="ExpressionAtlas" id="Q9FXE4">
    <property type="expression patterns" value="baseline and differential"/>
</dbReference>
<dbReference type="GO" id="GO:0046872">
    <property type="term" value="F:metal ion binding"/>
    <property type="evidence" value="ECO:0007669"/>
    <property type="project" value="UniProtKB-KW"/>
</dbReference>
<dbReference type="GO" id="GO:0004722">
    <property type="term" value="F:protein serine/threonine phosphatase activity"/>
    <property type="evidence" value="ECO:0007669"/>
    <property type="project" value="UniProtKB-EC"/>
</dbReference>
<dbReference type="CDD" id="cd00143">
    <property type="entry name" value="PP2Cc"/>
    <property type="match status" value="1"/>
</dbReference>
<dbReference type="Gene3D" id="3.60.40.10">
    <property type="entry name" value="PPM-type phosphatase domain"/>
    <property type="match status" value="1"/>
</dbReference>
<dbReference type="InterPro" id="IPR015655">
    <property type="entry name" value="PP2C"/>
</dbReference>
<dbReference type="InterPro" id="IPR000222">
    <property type="entry name" value="PP2C_BS"/>
</dbReference>
<dbReference type="InterPro" id="IPR036457">
    <property type="entry name" value="PPM-type-like_dom_sf"/>
</dbReference>
<dbReference type="InterPro" id="IPR001932">
    <property type="entry name" value="PPM-type_phosphatase-like_dom"/>
</dbReference>
<dbReference type="PANTHER" id="PTHR47992">
    <property type="entry name" value="PROTEIN PHOSPHATASE"/>
    <property type="match status" value="1"/>
</dbReference>
<dbReference type="Pfam" id="PF00481">
    <property type="entry name" value="PP2C"/>
    <property type="match status" value="1"/>
</dbReference>
<dbReference type="SMART" id="SM00332">
    <property type="entry name" value="PP2Cc"/>
    <property type="match status" value="1"/>
</dbReference>
<dbReference type="SUPFAM" id="SSF81606">
    <property type="entry name" value="PP2C-like"/>
    <property type="match status" value="1"/>
</dbReference>
<dbReference type="PROSITE" id="PS01032">
    <property type="entry name" value="PPM_1"/>
    <property type="match status" value="1"/>
</dbReference>
<dbReference type="PROSITE" id="PS51746">
    <property type="entry name" value="PPM_2"/>
    <property type="match status" value="1"/>
</dbReference>
<protein>
    <recommendedName>
        <fullName>Probable protein phosphatase 2C 14</fullName>
        <shortName>AtPP2C14</shortName>
        <ecNumber>3.1.3.16</ecNumber>
    </recommendedName>
    <alternativeName>
        <fullName>Protein phosphatase AP2C4</fullName>
    </alternativeName>
</protein>
<accession>Q9FXE4</accession>
<comment type="catalytic activity">
    <reaction>
        <text>O-phospho-L-seryl-[protein] + H2O = L-seryl-[protein] + phosphate</text>
        <dbReference type="Rhea" id="RHEA:20629"/>
        <dbReference type="Rhea" id="RHEA-COMP:9863"/>
        <dbReference type="Rhea" id="RHEA-COMP:11604"/>
        <dbReference type="ChEBI" id="CHEBI:15377"/>
        <dbReference type="ChEBI" id="CHEBI:29999"/>
        <dbReference type="ChEBI" id="CHEBI:43474"/>
        <dbReference type="ChEBI" id="CHEBI:83421"/>
        <dbReference type="EC" id="3.1.3.16"/>
    </reaction>
</comment>
<comment type="catalytic activity">
    <reaction>
        <text>O-phospho-L-threonyl-[protein] + H2O = L-threonyl-[protein] + phosphate</text>
        <dbReference type="Rhea" id="RHEA:47004"/>
        <dbReference type="Rhea" id="RHEA-COMP:11060"/>
        <dbReference type="Rhea" id="RHEA-COMP:11605"/>
        <dbReference type="ChEBI" id="CHEBI:15377"/>
        <dbReference type="ChEBI" id="CHEBI:30013"/>
        <dbReference type="ChEBI" id="CHEBI:43474"/>
        <dbReference type="ChEBI" id="CHEBI:61977"/>
        <dbReference type="EC" id="3.1.3.16"/>
    </reaction>
</comment>
<comment type="cofactor">
    <cofactor evidence="1">
        <name>Mg(2+)</name>
        <dbReference type="ChEBI" id="CHEBI:18420"/>
    </cofactor>
    <cofactor evidence="1">
        <name>Mn(2+)</name>
        <dbReference type="ChEBI" id="CHEBI:29035"/>
    </cofactor>
    <text evidence="1">Binds 2 magnesium or manganese ions per subunit.</text>
</comment>
<comment type="similarity">
    <text evidence="4">Belongs to the PP2C family.</text>
</comment>
<comment type="sequence caution" evidence="4">
    <conflict type="erroneous gene model prediction">
        <sequence resource="EMBL-CDS" id="AAG28911"/>
    </conflict>
</comment>
<comment type="sequence caution" evidence="4">
    <conflict type="miscellaneous discrepancy">
        <sequence resource="EMBL" id="BX813565"/>
    </conflict>
    <text>Sequencing errors.</text>
</comment>
<proteinExistence type="evidence at transcript level"/>